<name>HIR1_YARLI</name>
<protein>
    <recommendedName>
        <fullName>Protein HIR1</fullName>
    </recommendedName>
</protein>
<evidence type="ECO:0000250" key="1"/>
<evidence type="ECO:0000256" key="2">
    <source>
        <dbReference type="SAM" id="MobiDB-lite"/>
    </source>
</evidence>
<evidence type="ECO:0000305" key="3"/>
<organism>
    <name type="scientific">Yarrowia lipolytica (strain CLIB 122 / E 150)</name>
    <name type="common">Yeast</name>
    <name type="synonym">Candida lipolytica</name>
    <dbReference type="NCBI Taxonomy" id="284591"/>
    <lineage>
        <taxon>Eukaryota</taxon>
        <taxon>Fungi</taxon>
        <taxon>Dikarya</taxon>
        <taxon>Ascomycota</taxon>
        <taxon>Saccharomycotina</taxon>
        <taxon>Dipodascomycetes</taxon>
        <taxon>Dipodascales</taxon>
        <taxon>Dipodascales incertae sedis</taxon>
        <taxon>Yarrowia</taxon>
    </lineage>
</organism>
<accession>Q6C553</accession>
<comment type="function">
    <text evidence="1">Required for replication-independent chromatin assembly and for the periodic repression of histone gene transcription during the cell cycle.</text>
</comment>
<comment type="subcellular location">
    <subcellularLocation>
        <location evidence="1">Nucleus</location>
    </subcellularLocation>
</comment>
<comment type="similarity">
    <text evidence="3">Belongs to the WD repeat HIR1 family.</text>
</comment>
<dbReference type="EMBL" id="CR382131">
    <property type="protein sequence ID" value="CAG79804.2"/>
    <property type="molecule type" value="Genomic_DNA"/>
</dbReference>
<dbReference type="RefSeq" id="XP_504209.2">
    <property type="nucleotide sequence ID" value="XM_504209.2"/>
</dbReference>
<dbReference type="SMR" id="Q6C553"/>
<dbReference type="FunCoup" id="Q6C553">
    <property type="interactions" value="182"/>
</dbReference>
<dbReference type="STRING" id="284591.Q6C553"/>
<dbReference type="EnsemblFungi" id="CAG79804">
    <property type="protein sequence ID" value="CAG79804"/>
    <property type="gene ID" value="YALI0_E20933g"/>
</dbReference>
<dbReference type="KEGG" id="yli:2911845"/>
<dbReference type="VEuPathDB" id="FungiDB:YALI0_E20933g"/>
<dbReference type="HOGENOM" id="CLU_004372_3_0_1"/>
<dbReference type="InParanoid" id="Q6C553"/>
<dbReference type="OMA" id="RGSWDGD"/>
<dbReference type="OrthoDB" id="123250at4891"/>
<dbReference type="Proteomes" id="UP000001300">
    <property type="component" value="Chromosome E"/>
</dbReference>
<dbReference type="GO" id="GO:0000785">
    <property type="term" value="C:chromatin"/>
    <property type="evidence" value="ECO:0000318"/>
    <property type="project" value="GO_Central"/>
</dbReference>
<dbReference type="GO" id="GO:0000417">
    <property type="term" value="C:HIR complex"/>
    <property type="evidence" value="ECO:0000318"/>
    <property type="project" value="GO_Central"/>
</dbReference>
<dbReference type="GO" id="GO:0005634">
    <property type="term" value="C:nucleus"/>
    <property type="evidence" value="ECO:0007669"/>
    <property type="project" value="UniProtKB-SubCell"/>
</dbReference>
<dbReference type="GO" id="GO:0006338">
    <property type="term" value="P:chromatin remodeling"/>
    <property type="evidence" value="ECO:0000318"/>
    <property type="project" value="GO_Central"/>
</dbReference>
<dbReference type="GO" id="GO:0006351">
    <property type="term" value="P:DNA-templated transcription"/>
    <property type="evidence" value="ECO:0007669"/>
    <property type="project" value="InterPro"/>
</dbReference>
<dbReference type="GO" id="GO:0006355">
    <property type="term" value="P:regulation of DNA-templated transcription"/>
    <property type="evidence" value="ECO:0007669"/>
    <property type="project" value="InterPro"/>
</dbReference>
<dbReference type="CDD" id="cd00200">
    <property type="entry name" value="WD40"/>
    <property type="match status" value="1"/>
</dbReference>
<dbReference type="FunFam" id="2.130.10.10:FF:000290">
    <property type="entry name" value="Protein HIR"/>
    <property type="match status" value="1"/>
</dbReference>
<dbReference type="FunFam" id="2.130.10.10:FF:001073">
    <property type="entry name" value="Protein HIR"/>
    <property type="match status" value="1"/>
</dbReference>
<dbReference type="Gene3D" id="2.130.10.10">
    <property type="entry name" value="YVTN repeat-like/Quinoprotein amine dehydrogenase"/>
    <property type="match status" value="2"/>
</dbReference>
<dbReference type="InterPro" id="IPR055410">
    <property type="entry name" value="CAF1B_HIR1_beta-prop"/>
</dbReference>
<dbReference type="InterPro" id="IPR031120">
    <property type="entry name" value="HIR1-like"/>
</dbReference>
<dbReference type="InterPro" id="IPR011494">
    <property type="entry name" value="HIRA-like_C"/>
</dbReference>
<dbReference type="InterPro" id="IPR019015">
    <property type="entry name" value="HIRA_B_motif"/>
</dbReference>
<dbReference type="InterPro" id="IPR015943">
    <property type="entry name" value="WD40/YVTN_repeat-like_dom_sf"/>
</dbReference>
<dbReference type="InterPro" id="IPR036322">
    <property type="entry name" value="WD40_repeat_dom_sf"/>
</dbReference>
<dbReference type="InterPro" id="IPR001680">
    <property type="entry name" value="WD40_rpt"/>
</dbReference>
<dbReference type="PANTHER" id="PTHR13831">
    <property type="entry name" value="MEMBER OF THE HIR1 FAMILY OF WD-REPEAT PROTEINS"/>
    <property type="match status" value="1"/>
</dbReference>
<dbReference type="PANTHER" id="PTHR13831:SF0">
    <property type="entry name" value="PROTEIN HIRA"/>
    <property type="match status" value="1"/>
</dbReference>
<dbReference type="Pfam" id="PF24105">
    <property type="entry name" value="Beta-prop_CAF1B_HIR1"/>
    <property type="match status" value="1"/>
</dbReference>
<dbReference type="Pfam" id="PF07569">
    <property type="entry name" value="Hira"/>
    <property type="match status" value="1"/>
</dbReference>
<dbReference type="Pfam" id="PF09453">
    <property type="entry name" value="HIRA_B"/>
    <property type="match status" value="1"/>
</dbReference>
<dbReference type="SMART" id="SM00320">
    <property type="entry name" value="WD40"/>
    <property type="match status" value="6"/>
</dbReference>
<dbReference type="SUPFAM" id="SSF50978">
    <property type="entry name" value="WD40 repeat-like"/>
    <property type="match status" value="2"/>
</dbReference>
<dbReference type="PROSITE" id="PS00678">
    <property type="entry name" value="WD_REPEATS_1"/>
    <property type="match status" value="1"/>
</dbReference>
<dbReference type="PROSITE" id="PS50082">
    <property type="entry name" value="WD_REPEATS_2"/>
    <property type="match status" value="4"/>
</dbReference>
<dbReference type="PROSITE" id="PS50294">
    <property type="entry name" value="WD_REPEATS_REGION"/>
    <property type="match status" value="2"/>
</dbReference>
<reference key="1">
    <citation type="journal article" date="2004" name="Nature">
        <title>Genome evolution in yeasts.</title>
        <authorList>
            <person name="Dujon B."/>
            <person name="Sherman D."/>
            <person name="Fischer G."/>
            <person name="Durrens P."/>
            <person name="Casaregola S."/>
            <person name="Lafontaine I."/>
            <person name="de Montigny J."/>
            <person name="Marck C."/>
            <person name="Neuveglise C."/>
            <person name="Talla E."/>
            <person name="Goffard N."/>
            <person name="Frangeul L."/>
            <person name="Aigle M."/>
            <person name="Anthouard V."/>
            <person name="Babour A."/>
            <person name="Barbe V."/>
            <person name="Barnay S."/>
            <person name="Blanchin S."/>
            <person name="Beckerich J.-M."/>
            <person name="Beyne E."/>
            <person name="Bleykasten C."/>
            <person name="Boisrame A."/>
            <person name="Boyer J."/>
            <person name="Cattolico L."/>
            <person name="Confanioleri F."/>
            <person name="de Daruvar A."/>
            <person name="Despons L."/>
            <person name="Fabre E."/>
            <person name="Fairhead C."/>
            <person name="Ferry-Dumazet H."/>
            <person name="Groppi A."/>
            <person name="Hantraye F."/>
            <person name="Hennequin C."/>
            <person name="Jauniaux N."/>
            <person name="Joyet P."/>
            <person name="Kachouri R."/>
            <person name="Kerrest A."/>
            <person name="Koszul R."/>
            <person name="Lemaire M."/>
            <person name="Lesur I."/>
            <person name="Ma L."/>
            <person name="Muller H."/>
            <person name="Nicaud J.-M."/>
            <person name="Nikolski M."/>
            <person name="Oztas S."/>
            <person name="Ozier-Kalogeropoulos O."/>
            <person name="Pellenz S."/>
            <person name="Potier S."/>
            <person name="Richard G.-F."/>
            <person name="Straub M.-L."/>
            <person name="Suleau A."/>
            <person name="Swennen D."/>
            <person name="Tekaia F."/>
            <person name="Wesolowski-Louvel M."/>
            <person name="Westhof E."/>
            <person name="Wirth B."/>
            <person name="Zeniou-Meyer M."/>
            <person name="Zivanovic Y."/>
            <person name="Bolotin-Fukuhara M."/>
            <person name="Thierry A."/>
            <person name="Bouchier C."/>
            <person name="Caudron B."/>
            <person name="Scarpelli C."/>
            <person name="Gaillardin C."/>
            <person name="Weissenbach J."/>
            <person name="Wincker P."/>
            <person name="Souciet J.-L."/>
        </authorList>
    </citation>
    <scope>NUCLEOTIDE SEQUENCE [LARGE SCALE GENOMIC DNA]</scope>
    <source>
        <strain>CLIB 122 / E 150</strain>
    </source>
</reference>
<gene>
    <name type="primary">HIR1</name>
    <name type="ordered locus">YALI0E20933g</name>
</gene>
<keyword id="KW-0156">Chromatin regulator</keyword>
<keyword id="KW-0539">Nucleus</keyword>
<keyword id="KW-1185">Reference proteome</keyword>
<keyword id="KW-0677">Repeat</keyword>
<keyword id="KW-0678">Repressor</keyword>
<keyword id="KW-0804">Transcription</keyword>
<keyword id="KW-0805">Transcription regulation</keyword>
<keyword id="KW-0853">WD repeat</keyword>
<proteinExistence type="inferred from homology"/>
<feature type="chain" id="PRO_0000286417" description="Protein HIR1">
    <location>
        <begin position="1"/>
        <end position="1058"/>
    </location>
</feature>
<feature type="repeat" description="WD 1">
    <location>
        <begin position="15"/>
        <end position="54"/>
    </location>
</feature>
<feature type="repeat" description="WD 2">
    <location>
        <begin position="82"/>
        <end position="121"/>
    </location>
</feature>
<feature type="repeat" description="WD 3">
    <location>
        <begin position="142"/>
        <end position="181"/>
    </location>
</feature>
<feature type="repeat" description="WD 4">
    <location>
        <begin position="184"/>
        <end position="223"/>
    </location>
</feature>
<feature type="repeat" description="WD 5">
    <location>
        <begin position="239"/>
        <end position="282"/>
    </location>
</feature>
<feature type="repeat" description="WD 6">
    <location>
        <begin position="319"/>
        <end position="364"/>
    </location>
</feature>
<feature type="repeat" description="WD 7">
    <location>
        <begin position="368"/>
        <end position="409"/>
    </location>
</feature>
<feature type="region of interest" description="Disordered" evidence="2">
    <location>
        <begin position="49"/>
        <end position="73"/>
    </location>
</feature>
<feature type="region of interest" description="Disordered" evidence="2">
    <location>
        <begin position="307"/>
        <end position="327"/>
    </location>
</feature>
<feature type="region of interest" description="Disordered" evidence="2">
    <location>
        <begin position="500"/>
        <end position="536"/>
    </location>
</feature>
<feature type="region of interest" description="Disordered" evidence="2">
    <location>
        <begin position="591"/>
        <end position="610"/>
    </location>
</feature>
<feature type="region of interest" description="Disordered" evidence="2">
    <location>
        <begin position="651"/>
        <end position="696"/>
    </location>
</feature>
<feature type="region of interest" description="Disordered" evidence="2">
    <location>
        <begin position="1023"/>
        <end position="1058"/>
    </location>
</feature>
<feature type="compositionally biased region" description="Polar residues" evidence="2">
    <location>
        <begin position="661"/>
        <end position="678"/>
    </location>
</feature>
<feature type="compositionally biased region" description="Polar residues" evidence="2">
    <location>
        <begin position="687"/>
        <end position="696"/>
    </location>
</feature>
<feature type="compositionally biased region" description="Basic and acidic residues" evidence="2">
    <location>
        <begin position="1046"/>
        <end position="1058"/>
    </location>
</feature>
<sequence>MYIVKPSWLCHSDDQKKFEVYSVTVSPDNQRVATGGQDGKVRIWSAQSIRDSAKGDNESSDTPSNLSGAPAPGAKQLCSMATHNGAVTVVRFSPDGRYLATGSDDRVVLVWERDSTKVPRKEFGSSGEADTESWIVRKRLAAHDNDIQDLAWAPDSSILVTVGLDSGVIVWSGTTFEKIQRLDAHNSHVKGITFDPANKFFATASDDRTVQIFRYNRASATDVTFSTEATITSPFKQSPLSTYFRRCSWSPDGNHIAAANATNGPVSVVAIINRGTWDSDISLIGHEAPCEVAAFCPRIFARTKEAAEKKDKKSSSEKDKESDVIDVDAEPKVPESVPITVIASAGQDKTLTIWNTSNPRPVVVCHDMALKTITDLAWSQDGMSLFATSLDGSISYVQFEEGELGYVVSMEENESRLTRYGGGKEAAQIPESVEQLVLEEKVEAKEVKDSEKRMEELMGAAGAGSKAIASGATVIPSPASTVAAAAAAPVTTTARATTPLTAATSNPSTPAKPAKQKVTITKDGRKRVAPQLLTTTSSSVQGTLPAATTSSAAVPVASATAETIPVNDFSKPSYALPKGGVSTLVIGSKRRSDDLEDGSNGIQTALKKTRPDDDVPEYIAPVVVSPATTTSQVRLGAPKVRNLLMRSMTVRDAEKPRMANESVSLANGENTSSSSAPHSFNFEVRNGSGNDQTPTKVSVTRNSQVVFVDFVPYYVHLIAGNGCYFWATSAEDGSIVVYSPNGRRMLPPLVTGAPLSFLESQNEYLLAISSVGMLYLWNVVDKKAVFPPVSLAPILDSGSRYEDGGVLRGPHVTQCGVTGSGRVIITLSTGCGYTYDEGLRSWCRLSEPWWATGSQYWSATQLLGDESAKSRWVLAVEERTAEEAQRRAGGRGRYLKQLTRATLNREGYEGMEGVVSIAHLENRIAAAEMLESKHELRTFIIMYARRIAEEGLRSRVDELCRELLGPGKSQDSTWSPTVCGLDKHELLKEVVLKIGKYRESQRVAVVYGQAIGLLEDEVLGVASSSKSAASKGSKDKEDNEEEDGDHDMTDFKDAMSEQ</sequence>